<sequence>MLNGIVVVNKPRGVTSSDCVYKLRKILQIRKIGHAGTLDPEVNGVLPIAIGQATKLIELMHEKPKSYIGSGMFGKATDSYDLDGTTTAEEKIVTPFTSDEIISGMKKLTGKIDQVPPIYSAVRVNGKRLYEYARENIPVERPKRKVNIYSYELTQDPEYDPLEKTESFNFAIRCSKGTYVRSLVNDLGEELGVPAVMTSLTRTSSSGFDLSQAVDLETIEKEIDYPEKWLQPIDSFFVDLPQLQISPDQFKRVSNGASIKLNTTYAKVALVYNGHIKAIYQRQGKIYRPEMMLLKNE</sequence>
<keyword id="KW-0413">Isomerase</keyword>
<keyword id="KW-0819">tRNA processing</keyword>
<organism>
    <name type="scientific">Lactobacillus johnsonii (strain CNCM I-12250 / La1 / NCC 533)</name>
    <dbReference type="NCBI Taxonomy" id="257314"/>
    <lineage>
        <taxon>Bacteria</taxon>
        <taxon>Bacillati</taxon>
        <taxon>Bacillota</taxon>
        <taxon>Bacilli</taxon>
        <taxon>Lactobacillales</taxon>
        <taxon>Lactobacillaceae</taxon>
        <taxon>Lactobacillus</taxon>
    </lineage>
</organism>
<accession>Q74IT0</accession>
<name>TRUB_LACJO</name>
<protein>
    <recommendedName>
        <fullName evidence="1">tRNA pseudouridine synthase B</fullName>
        <ecNumber evidence="1">5.4.99.25</ecNumber>
    </recommendedName>
    <alternativeName>
        <fullName evidence="1">tRNA pseudouridine(55) synthase</fullName>
        <shortName evidence="1">Psi55 synthase</shortName>
    </alternativeName>
    <alternativeName>
        <fullName evidence="1">tRNA pseudouridylate synthase</fullName>
    </alternativeName>
    <alternativeName>
        <fullName evidence="1">tRNA-uridine isomerase</fullName>
    </alternativeName>
</protein>
<gene>
    <name evidence="1" type="primary">truB</name>
    <name type="ordered locus">LJ_1485</name>
</gene>
<reference key="1">
    <citation type="journal article" date="2004" name="Proc. Natl. Acad. Sci. U.S.A.">
        <title>The genome sequence of the probiotic intestinal bacterium Lactobacillus johnsonii NCC 533.</title>
        <authorList>
            <person name="Pridmore R.D."/>
            <person name="Berger B."/>
            <person name="Desiere F."/>
            <person name="Vilanova D."/>
            <person name="Barretto C."/>
            <person name="Pittet A.-C."/>
            <person name="Zwahlen M.-C."/>
            <person name="Rouvet M."/>
            <person name="Altermann E."/>
            <person name="Barrangou R."/>
            <person name="Mollet B."/>
            <person name="Mercenier A."/>
            <person name="Klaenhammer T."/>
            <person name="Arigoni F."/>
            <person name="Schell M.A."/>
        </authorList>
    </citation>
    <scope>NUCLEOTIDE SEQUENCE [LARGE SCALE GENOMIC DNA]</scope>
    <source>
        <strain>CNCM I-1225 / La1 / NCC 533</strain>
    </source>
</reference>
<dbReference type="EC" id="5.4.99.25" evidence="1"/>
<dbReference type="EMBL" id="AE017198">
    <property type="protein sequence ID" value="AAS09253.1"/>
    <property type="molecule type" value="Genomic_DNA"/>
</dbReference>
<dbReference type="RefSeq" id="WP_011162236.1">
    <property type="nucleotide sequence ID" value="NC_005362.1"/>
</dbReference>
<dbReference type="SMR" id="Q74IT0"/>
<dbReference type="GeneID" id="83570188"/>
<dbReference type="KEGG" id="ljo:LJ_1485"/>
<dbReference type="PATRIC" id="fig|257314.6.peg.1303"/>
<dbReference type="eggNOG" id="COG0130">
    <property type="taxonomic scope" value="Bacteria"/>
</dbReference>
<dbReference type="HOGENOM" id="CLU_032087_0_1_9"/>
<dbReference type="Proteomes" id="UP000000581">
    <property type="component" value="Chromosome"/>
</dbReference>
<dbReference type="GO" id="GO:0003723">
    <property type="term" value="F:RNA binding"/>
    <property type="evidence" value="ECO:0007669"/>
    <property type="project" value="InterPro"/>
</dbReference>
<dbReference type="GO" id="GO:0160148">
    <property type="term" value="F:tRNA pseudouridine(55) synthase activity"/>
    <property type="evidence" value="ECO:0007669"/>
    <property type="project" value="UniProtKB-EC"/>
</dbReference>
<dbReference type="GO" id="GO:1990481">
    <property type="term" value="P:mRNA pseudouridine synthesis"/>
    <property type="evidence" value="ECO:0007669"/>
    <property type="project" value="TreeGrafter"/>
</dbReference>
<dbReference type="GO" id="GO:0031119">
    <property type="term" value="P:tRNA pseudouridine synthesis"/>
    <property type="evidence" value="ECO:0007669"/>
    <property type="project" value="UniProtKB-UniRule"/>
</dbReference>
<dbReference type="CDD" id="cd02573">
    <property type="entry name" value="PseudoU_synth_EcTruB"/>
    <property type="match status" value="1"/>
</dbReference>
<dbReference type="Gene3D" id="3.30.2350.10">
    <property type="entry name" value="Pseudouridine synthase"/>
    <property type="match status" value="1"/>
</dbReference>
<dbReference type="HAMAP" id="MF_01080">
    <property type="entry name" value="TruB_bact"/>
    <property type="match status" value="1"/>
</dbReference>
<dbReference type="InterPro" id="IPR020103">
    <property type="entry name" value="PsdUridine_synth_cat_dom_sf"/>
</dbReference>
<dbReference type="InterPro" id="IPR002501">
    <property type="entry name" value="PsdUridine_synth_N"/>
</dbReference>
<dbReference type="InterPro" id="IPR014780">
    <property type="entry name" value="tRNA_psdUridine_synth_TruB"/>
</dbReference>
<dbReference type="InterPro" id="IPR032819">
    <property type="entry name" value="TruB_C"/>
</dbReference>
<dbReference type="NCBIfam" id="TIGR00431">
    <property type="entry name" value="TruB"/>
    <property type="match status" value="1"/>
</dbReference>
<dbReference type="PANTHER" id="PTHR13767:SF2">
    <property type="entry name" value="PSEUDOURIDYLATE SYNTHASE TRUB1"/>
    <property type="match status" value="1"/>
</dbReference>
<dbReference type="PANTHER" id="PTHR13767">
    <property type="entry name" value="TRNA-PSEUDOURIDINE SYNTHASE"/>
    <property type="match status" value="1"/>
</dbReference>
<dbReference type="Pfam" id="PF16198">
    <property type="entry name" value="TruB_C_2"/>
    <property type="match status" value="1"/>
</dbReference>
<dbReference type="Pfam" id="PF01509">
    <property type="entry name" value="TruB_N"/>
    <property type="match status" value="1"/>
</dbReference>
<dbReference type="SUPFAM" id="SSF55120">
    <property type="entry name" value="Pseudouridine synthase"/>
    <property type="match status" value="1"/>
</dbReference>
<feature type="chain" id="PRO_0000121848" description="tRNA pseudouridine synthase B">
    <location>
        <begin position="1"/>
        <end position="297"/>
    </location>
</feature>
<feature type="active site" description="Nucleophile" evidence="1">
    <location>
        <position position="39"/>
    </location>
</feature>
<evidence type="ECO:0000255" key="1">
    <source>
        <dbReference type="HAMAP-Rule" id="MF_01080"/>
    </source>
</evidence>
<comment type="function">
    <text evidence="1">Responsible for synthesis of pseudouridine from uracil-55 in the psi GC loop of transfer RNAs.</text>
</comment>
<comment type="catalytic activity">
    <reaction evidence="1">
        <text>uridine(55) in tRNA = pseudouridine(55) in tRNA</text>
        <dbReference type="Rhea" id="RHEA:42532"/>
        <dbReference type="Rhea" id="RHEA-COMP:10101"/>
        <dbReference type="Rhea" id="RHEA-COMP:10102"/>
        <dbReference type="ChEBI" id="CHEBI:65314"/>
        <dbReference type="ChEBI" id="CHEBI:65315"/>
        <dbReference type="EC" id="5.4.99.25"/>
    </reaction>
</comment>
<comment type="similarity">
    <text evidence="1">Belongs to the pseudouridine synthase TruB family. Type 1 subfamily.</text>
</comment>
<proteinExistence type="inferred from homology"/>